<keyword id="KW-0067">ATP-binding</keyword>
<keyword id="KW-0436">Ligase</keyword>
<keyword id="KW-0460">Magnesium</keyword>
<keyword id="KW-0479">Metal-binding</keyword>
<keyword id="KW-0547">Nucleotide-binding</keyword>
<keyword id="KW-0816">Tricarboxylic acid cycle</keyword>
<protein>
    <recommendedName>
        <fullName evidence="1">Succinate--CoA ligase [ADP-forming] subunit beta</fullName>
        <ecNumber evidence="1">6.2.1.5</ecNumber>
    </recommendedName>
    <alternativeName>
        <fullName evidence="1">Succinyl-CoA synthetase subunit beta</fullName>
        <shortName evidence="1">SCS-beta</shortName>
    </alternativeName>
</protein>
<accession>A6U164</accession>
<gene>
    <name evidence="1" type="primary">sucC</name>
    <name type="ordered locus">SaurJH1_1329</name>
</gene>
<proteinExistence type="inferred from homology"/>
<organism>
    <name type="scientific">Staphylococcus aureus (strain JH1)</name>
    <dbReference type="NCBI Taxonomy" id="359787"/>
    <lineage>
        <taxon>Bacteria</taxon>
        <taxon>Bacillati</taxon>
        <taxon>Bacillota</taxon>
        <taxon>Bacilli</taxon>
        <taxon>Bacillales</taxon>
        <taxon>Staphylococcaceae</taxon>
        <taxon>Staphylococcus</taxon>
    </lineage>
</organism>
<comment type="function">
    <text evidence="1">Succinyl-CoA synthetase functions in the citric acid cycle (TCA), coupling the hydrolysis of succinyl-CoA to the synthesis of either ATP or GTP and thus represents the only step of substrate-level phosphorylation in the TCA. The beta subunit provides nucleotide specificity of the enzyme and binds the substrate succinate, while the binding sites for coenzyme A and phosphate are found in the alpha subunit.</text>
</comment>
<comment type="catalytic activity">
    <reaction evidence="1">
        <text>succinate + ATP + CoA = succinyl-CoA + ADP + phosphate</text>
        <dbReference type="Rhea" id="RHEA:17661"/>
        <dbReference type="ChEBI" id="CHEBI:30031"/>
        <dbReference type="ChEBI" id="CHEBI:30616"/>
        <dbReference type="ChEBI" id="CHEBI:43474"/>
        <dbReference type="ChEBI" id="CHEBI:57287"/>
        <dbReference type="ChEBI" id="CHEBI:57292"/>
        <dbReference type="ChEBI" id="CHEBI:456216"/>
        <dbReference type="EC" id="6.2.1.5"/>
    </reaction>
    <physiologicalReaction direction="right-to-left" evidence="1">
        <dbReference type="Rhea" id="RHEA:17663"/>
    </physiologicalReaction>
</comment>
<comment type="catalytic activity">
    <reaction evidence="1">
        <text>GTP + succinate + CoA = succinyl-CoA + GDP + phosphate</text>
        <dbReference type="Rhea" id="RHEA:22120"/>
        <dbReference type="ChEBI" id="CHEBI:30031"/>
        <dbReference type="ChEBI" id="CHEBI:37565"/>
        <dbReference type="ChEBI" id="CHEBI:43474"/>
        <dbReference type="ChEBI" id="CHEBI:57287"/>
        <dbReference type="ChEBI" id="CHEBI:57292"/>
        <dbReference type="ChEBI" id="CHEBI:58189"/>
    </reaction>
    <physiologicalReaction direction="right-to-left" evidence="1">
        <dbReference type="Rhea" id="RHEA:22122"/>
    </physiologicalReaction>
</comment>
<comment type="cofactor">
    <cofactor evidence="1">
        <name>Mg(2+)</name>
        <dbReference type="ChEBI" id="CHEBI:18420"/>
    </cofactor>
    <text evidence="1">Binds 1 Mg(2+) ion per subunit.</text>
</comment>
<comment type="pathway">
    <text evidence="1">Carbohydrate metabolism; tricarboxylic acid cycle; succinate from succinyl-CoA (ligase route): step 1/1.</text>
</comment>
<comment type="subunit">
    <text evidence="1">Heterotetramer of two alpha and two beta subunits.</text>
</comment>
<comment type="similarity">
    <text evidence="1">Belongs to the succinate/malate CoA ligase beta subunit family.</text>
</comment>
<feature type="chain" id="PRO_1000082242" description="Succinate--CoA ligase [ADP-forming] subunit beta">
    <location>
        <begin position="1"/>
        <end position="388"/>
    </location>
</feature>
<feature type="domain" description="ATP-grasp" evidence="1">
    <location>
        <begin position="9"/>
        <end position="244"/>
    </location>
</feature>
<feature type="binding site" evidence="1">
    <location>
        <position position="46"/>
    </location>
    <ligand>
        <name>ATP</name>
        <dbReference type="ChEBI" id="CHEBI:30616"/>
    </ligand>
</feature>
<feature type="binding site" evidence="1">
    <location>
        <begin position="53"/>
        <end position="55"/>
    </location>
    <ligand>
        <name>ATP</name>
        <dbReference type="ChEBI" id="CHEBI:30616"/>
    </ligand>
</feature>
<feature type="binding site" evidence="1">
    <location>
        <position position="99"/>
    </location>
    <ligand>
        <name>ATP</name>
        <dbReference type="ChEBI" id="CHEBI:30616"/>
    </ligand>
</feature>
<feature type="binding site" evidence="1">
    <location>
        <position position="102"/>
    </location>
    <ligand>
        <name>ATP</name>
        <dbReference type="ChEBI" id="CHEBI:30616"/>
    </ligand>
</feature>
<feature type="binding site" evidence="1">
    <location>
        <position position="107"/>
    </location>
    <ligand>
        <name>ATP</name>
        <dbReference type="ChEBI" id="CHEBI:30616"/>
    </ligand>
</feature>
<feature type="binding site" evidence="1">
    <location>
        <position position="199"/>
    </location>
    <ligand>
        <name>Mg(2+)</name>
        <dbReference type="ChEBI" id="CHEBI:18420"/>
    </ligand>
</feature>
<feature type="binding site" evidence="1">
    <location>
        <position position="213"/>
    </location>
    <ligand>
        <name>Mg(2+)</name>
        <dbReference type="ChEBI" id="CHEBI:18420"/>
    </ligand>
</feature>
<feature type="binding site" evidence="1">
    <location>
        <position position="264"/>
    </location>
    <ligand>
        <name>substrate</name>
        <note>ligand shared with subunit alpha</note>
    </ligand>
</feature>
<feature type="binding site" evidence="1">
    <location>
        <begin position="321"/>
        <end position="323"/>
    </location>
    <ligand>
        <name>substrate</name>
        <note>ligand shared with subunit alpha</note>
    </ligand>
</feature>
<sequence>MNIHEYQGKEIFRSMGVAVPEGRVAFTAEEAVEKAKELNSDVYVVKAQIHAGGRGKAGGVKIAKSLSEVETYAKELLGKTLVTHQTGPEGKEIKRLYIEEGCAIQKEYYVGFVIDRATDQVTLMASEEGGTEIEEVAAKTPEKIFKETIDPVIGLSPFQARRIAFNINIPKESVNKAAKFLLALYNVFIEKDCSIVEINPLVTTADGDVLALDAKINFDDNALFRHKDVVELRDLEEEDPKEIEASKHDLSYIALDGDIGCMVNGAGLAMATMDTINHFGGNPANFLDAGGSATREKVTEAFKIILGDENVKGIFVNIFGGIMKCDVIAEGIVEAVKEVDLTLPLVVRLEGTNVELGKKILKDSGLAIEPAATMAEGAQKIVKLVKEA</sequence>
<name>SUCC_STAA2</name>
<dbReference type="EC" id="6.2.1.5" evidence="1"/>
<dbReference type="EMBL" id="CP000736">
    <property type="protein sequence ID" value="ABR52182.1"/>
    <property type="molecule type" value="Genomic_DNA"/>
</dbReference>
<dbReference type="SMR" id="A6U164"/>
<dbReference type="KEGG" id="sah:SaurJH1_1329"/>
<dbReference type="HOGENOM" id="CLU_037430_0_2_9"/>
<dbReference type="UniPathway" id="UPA00223">
    <property type="reaction ID" value="UER00999"/>
</dbReference>
<dbReference type="GO" id="GO:0005829">
    <property type="term" value="C:cytosol"/>
    <property type="evidence" value="ECO:0007669"/>
    <property type="project" value="TreeGrafter"/>
</dbReference>
<dbReference type="GO" id="GO:0042709">
    <property type="term" value="C:succinate-CoA ligase complex"/>
    <property type="evidence" value="ECO:0007669"/>
    <property type="project" value="TreeGrafter"/>
</dbReference>
<dbReference type="GO" id="GO:0005524">
    <property type="term" value="F:ATP binding"/>
    <property type="evidence" value="ECO:0007669"/>
    <property type="project" value="UniProtKB-UniRule"/>
</dbReference>
<dbReference type="GO" id="GO:0000287">
    <property type="term" value="F:magnesium ion binding"/>
    <property type="evidence" value="ECO:0007669"/>
    <property type="project" value="UniProtKB-UniRule"/>
</dbReference>
<dbReference type="GO" id="GO:0004775">
    <property type="term" value="F:succinate-CoA ligase (ADP-forming) activity"/>
    <property type="evidence" value="ECO:0007669"/>
    <property type="project" value="UniProtKB-UniRule"/>
</dbReference>
<dbReference type="GO" id="GO:0004776">
    <property type="term" value="F:succinate-CoA ligase (GDP-forming) activity"/>
    <property type="evidence" value="ECO:0007669"/>
    <property type="project" value="RHEA"/>
</dbReference>
<dbReference type="GO" id="GO:0006104">
    <property type="term" value="P:succinyl-CoA metabolic process"/>
    <property type="evidence" value="ECO:0007669"/>
    <property type="project" value="TreeGrafter"/>
</dbReference>
<dbReference type="GO" id="GO:0006099">
    <property type="term" value="P:tricarboxylic acid cycle"/>
    <property type="evidence" value="ECO:0007669"/>
    <property type="project" value="UniProtKB-UniRule"/>
</dbReference>
<dbReference type="FunFam" id="3.30.1490.20:FF:000002">
    <property type="entry name" value="Succinate--CoA ligase [ADP-forming] subunit beta"/>
    <property type="match status" value="1"/>
</dbReference>
<dbReference type="FunFam" id="3.30.470.20:FF:000002">
    <property type="entry name" value="Succinate--CoA ligase [ADP-forming] subunit beta"/>
    <property type="match status" value="1"/>
</dbReference>
<dbReference type="FunFam" id="3.40.50.261:FF:000001">
    <property type="entry name" value="Succinate--CoA ligase [ADP-forming] subunit beta"/>
    <property type="match status" value="1"/>
</dbReference>
<dbReference type="Gene3D" id="3.30.1490.20">
    <property type="entry name" value="ATP-grasp fold, A domain"/>
    <property type="match status" value="1"/>
</dbReference>
<dbReference type="Gene3D" id="3.30.470.20">
    <property type="entry name" value="ATP-grasp fold, B domain"/>
    <property type="match status" value="1"/>
</dbReference>
<dbReference type="Gene3D" id="3.40.50.261">
    <property type="entry name" value="Succinyl-CoA synthetase domains"/>
    <property type="match status" value="1"/>
</dbReference>
<dbReference type="HAMAP" id="MF_00558">
    <property type="entry name" value="Succ_CoA_beta"/>
    <property type="match status" value="1"/>
</dbReference>
<dbReference type="InterPro" id="IPR011761">
    <property type="entry name" value="ATP-grasp"/>
</dbReference>
<dbReference type="InterPro" id="IPR013650">
    <property type="entry name" value="ATP-grasp_succ-CoA_synth-type"/>
</dbReference>
<dbReference type="InterPro" id="IPR013815">
    <property type="entry name" value="ATP_grasp_subdomain_1"/>
</dbReference>
<dbReference type="InterPro" id="IPR017866">
    <property type="entry name" value="Succ-CoA_synthase_bsu_CS"/>
</dbReference>
<dbReference type="InterPro" id="IPR005811">
    <property type="entry name" value="SUCC_ACL_C"/>
</dbReference>
<dbReference type="InterPro" id="IPR005809">
    <property type="entry name" value="Succ_CoA_ligase-like_bsu"/>
</dbReference>
<dbReference type="InterPro" id="IPR016102">
    <property type="entry name" value="Succinyl-CoA_synth-like"/>
</dbReference>
<dbReference type="NCBIfam" id="NF001913">
    <property type="entry name" value="PRK00696.1"/>
    <property type="match status" value="1"/>
</dbReference>
<dbReference type="NCBIfam" id="TIGR01016">
    <property type="entry name" value="sucCoAbeta"/>
    <property type="match status" value="1"/>
</dbReference>
<dbReference type="PANTHER" id="PTHR11815:SF10">
    <property type="entry name" value="SUCCINATE--COA LIGASE [GDP-FORMING] SUBUNIT BETA, MITOCHONDRIAL"/>
    <property type="match status" value="1"/>
</dbReference>
<dbReference type="PANTHER" id="PTHR11815">
    <property type="entry name" value="SUCCINYL-COA SYNTHETASE BETA CHAIN"/>
    <property type="match status" value="1"/>
</dbReference>
<dbReference type="Pfam" id="PF08442">
    <property type="entry name" value="ATP-grasp_2"/>
    <property type="match status" value="1"/>
</dbReference>
<dbReference type="Pfam" id="PF00549">
    <property type="entry name" value="Ligase_CoA"/>
    <property type="match status" value="1"/>
</dbReference>
<dbReference type="PIRSF" id="PIRSF001554">
    <property type="entry name" value="SucCS_beta"/>
    <property type="match status" value="1"/>
</dbReference>
<dbReference type="SUPFAM" id="SSF56059">
    <property type="entry name" value="Glutathione synthetase ATP-binding domain-like"/>
    <property type="match status" value="1"/>
</dbReference>
<dbReference type="SUPFAM" id="SSF52210">
    <property type="entry name" value="Succinyl-CoA synthetase domains"/>
    <property type="match status" value="1"/>
</dbReference>
<dbReference type="PROSITE" id="PS50975">
    <property type="entry name" value="ATP_GRASP"/>
    <property type="match status" value="1"/>
</dbReference>
<dbReference type="PROSITE" id="PS01217">
    <property type="entry name" value="SUCCINYL_COA_LIG_3"/>
    <property type="match status" value="1"/>
</dbReference>
<evidence type="ECO:0000255" key="1">
    <source>
        <dbReference type="HAMAP-Rule" id="MF_00558"/>
    </source>
</evidence>
<reference key="1">
    <citation type="submission" date="2007-06" db="EMBL/GenBank/DDBJ databases">
        <title>Complete sequence of chromosome of Staphylococcus aureus subsp. aureus JH1.</title>
        <authorList>
            <consortium name="US DOE Joint Genome Institute"/>
            <person name="Copeland A."/>
            <person name="Lucas S."/>
            <person name="Lapidus A."/>
            <person name="Barry K."/>
            <person name="Detter J.C."/>
            <person name="Glavina del Rio T."/>
            <person name="Hammon N."/>
            <person name="Israni S."/>
            <person name="Dalin E."/>
            <person name="Tice H."/>
            <person name="Pitluck S."/>
            <person name="Chain P."/>
            <person name="Malfatti S."/>
            <person name="Shin M."/>
            <person name="Vergez L."/>
            <person name="Schmutz J."/>
            <person name="Larimer F."/>
            <person name="Land M."/>
            <person name="Hauser L."/>
            <person name="Kyrpides N."/>
            <person name="Ivanova N."/>
            <person name="Tomasz A."/>
            <person name="Richardson P."/>
        </authorList>
    </citation>
    <scope>NUCLEOTIDE SEQUENCE [LARGE SCALE GENOMIC DNA]</scope>
    <source>
        <strain>JH1</strain>
    </source>
</reference>